<organism>
    <name type="scientific">Ginkgo biloba</name>
    <name type="common">Ginkgo</name>
    <name type="synonym">Maidenhair tree</name>
    <dbReference type="NCBI Taxonomy" id="3311"/>
    <lineage>
        <taxon>Eukaryota</taxon>
        <taxon>Viridiplantae</taxon>
        <taxon>Streptophyta</taxon>
        <taxon>Embryophyta</taxon>
        <taxon>Tracheophyta</taxon>
        <taxon>Spermatophyta</taxon>
        <taxon>Ginkgoidae</taxon>
        <taxon>Ginkgoales</taxon>
        <taxon>Ginkgoaceae</taxon>
        <taxon>Ginkgo</taxon>
    </lineage>
</organism>
<reference key="1">
    <citation type="journal article" date="2000" name="Am. J. Bot.">
        <title>Utility of 17 chloroplast genes for inferring the phylogeny of the basal angiosperms.</title>
        <authorList>
            <person name="Graham S.W."/>
            <person name="Olmstead R.G."/>
        </authorList>
    </citation>
    <scope>NUCLEOTIDE SEQUENCE [GENOMIC DNA]</scope>
</reference>
<feature type="chain" id="PRO_0000124456" description="Small ribosomal subunit protein uS7c">
    <location>
        <begin position="1"/>
        <end position="155"/>
    </location>
</feature>
<evidence type="ECO:0000250" key="1"/>
<evidence type="ECO:0000305" key="2"/>
<comment type="function">
    <text evidence="1">One of the primary rRNA binding proteins, it binds directly to 16S rRNA where it nucleates assembly of the head domain of the 30S subunit.</text>
</comment>
<comment type="subunit">
    <text>Part of the 30S ribosomal subunit.</text>
</comment>
<comment type="subcellular location">
    <subcellularLocation>
        <location>Plastid</location>
        <location>Chloroplast</location>
    </subcellularLocation>
</comment>
<comment type="similarity">
    <text evidence="2">Belongs to the universal ribosomal protein uS7 family.</text>
</comment>
<keyword id="KW-0150">Chloroplast</keyword>
<keyword id="KW-0934">Plastid</keyword>
<keyword id="KW-0687">Ribonucleoprotein</keyword>
<keyword id="KW-0689">Ribosomal protein</keyword>
<keyword id="KW-0694">RNA-binding</keyword>
<keyword id="KW-0699">rRNA-binding</keyword>
<dbReference type="EMBL" id="AF123779">
    <property type="protein sequence ID" value="AAG26116.1"/>
    <property type="molecule type" value="Genomic_DNA"/>
</dbReference>
<dbReference type="GO" id="GO:0009507">
    <property type="term" value="C:chloroplast"/>
    <property type="evidence" value="ECO:0007669"/>
    <property type="project" value="UniProtKB-SubCell"/>
</dbReference>
<dbReference type="GO" id="GO:0015935">
    <property type="term" value="C:small ribosomal subunit"/>
    <property type="evidence" value="ECO:0007669"/>
    <property type="project" value="InterPro"/>
</dbReference>
<dbReference type="GO" id="GO:0019843">
    <property type="term" value="F:rRNA binding"/>
    <property type="evidence" value="ECO:0007669"/>
    <property type="project" value="UniProtKB-UniRule"/>
</dbReference>
<dbReference type="GO" id="GO:0003735">
    <property type="term" value="F:structural constituent of ribosome"/>
    <property type="evidence" value="ECO:0007669"/>
    <property type="project" value="InterPro"/>
</dbReference>
<dbReference type="GO" id="GO:0006412">
    <property type="term" value="P:translation"/>
    <property type="evidence" value="ECO:0007669"/>
    <property type="project" value="UniProtKB-UniRule"/>
</dbReference>
<dbReference type="CDD" id="cd14871">
    <property type="entry name" value="uS7_Chloroplast"/>
    <property type="match status" value="1"/>
</dbReference>
<dbReference type="FunFam" id="1.10.455.10:FF:000001">
    <property type="entry name" value="30S ribosomal protein S7"/>
    <property type="match status" value="1"/>
</dbReference>
<dbReference type="Gene3D" id="1.10.455.10">
    <property type="entry name" value="Ribosomal protein S7 domain"/>
    <property type="match status" value="1"/>
</dbReference>
<dbReference type="HAMAP" id="MF_00480_B">
    <property type="entry name" value="Ribosomal_uS7_B"/>
    <property type="match status" value="1"/>
</dbReference>
<dbReference type="InterPro" id="IPR000235">
    <property type="entry name" value="Ribosomal_uS7"/>
</dbReference>
<dbReference type="InterPro" id="IPR005717">
    <property type="entry name" value="Ribosomal_uS7_bac/org-type"/>
</dbReference>
<dbReference type="InterPro" id="IPR023798">
    <property type="entry name" value="Ribosomal_uS7_dom"/>
</dbReference>
<dbReference type="InterPro" id="IPR036823">
    <property type="entry name" value="Ribosomal_uS7_dom_sf"/>
</dbReference>
<dbReference type="NCBIfam" id="TIGR01029">
    <property type="entry name" value="rpsG_bact"/>
    <property type="match status" value="1"/>
</dbReference>
<dbReference type="PANTHER" id="PTHR11205">
    <property type="entry name" value="RIBOSOMAL PROTEIN S7"/>
    <property type="match status" value="1"/>
</dbReference>
<dbReference type="Pfam" id="PF00177">
    <property type="entry name" value="Ribosomal_S7"/>
    <property type="match status" value="1"/>
</dbReference>
<dbReference type="PIRSF" id="PIRSF002122">
    <property type="entry name" value="RPS7p_RPS7a_RPS5e_RPS7o"/>
    <property type="match status" value="1"/>
</dbReference>
<dbReference type="SUPFAM" id="SSF47973">
    <property type="entry name" value="Ribosomal protein S7"/>
    <property type="match status" value="1"/>
</dbReference>
<accession>Q9GFL3</accession>
<name>RR7_GINBI</name>
<geneLocation type="chloroplast"/>
<gene>
    <name type="primary">rps7</name>
</gene>
<proteinExistence type="inferred from homology"/>
<sequence length="155" mass="17783">MSRRSTAEKETAKSDPIYRNRFINMLVNRILKHGKKSLAYRILYRAMKKIQQKTGKNPLSVSRQAIRGVTPDVTVKARRVGGSTYQVPIEIRSTQGKALAIRWLLGASRKRPGRNMAFKLSYELMDAARENGNAIRKKEETHRMAEAXRAFAHFR</sequence>
<protein>
    <recommendedName>
        <fullName evidence="2">Small ribosomal subunit protein uS7c</fullName>
    </recommendedName>
    <alternativeName>
        <fullName>30S ribosomal protein S7, chloroplastic</fullName>
    </alternativeName>
</protein>